<gene>
    <name evidence="1" type="primary">tsaD</name>
    <name type="synonym">gcp</name>
    <name type="ordered locus">PFL_5660</name>
</gene>
<feature type="chain" id="PRO_0000303493" description="tRNA N6-adenosine threonylcarbamoyltransferase">
    <location>
        <begin position="1"/>
        <end position="341"/>
    </location>
</feature>
<feature type="binding site" evidence="1">
    <location>
        <position position="111"/>
    </location>
    <ligand>
        <name>Fe cation</name>
        <dbReference type="ChEBI" id="CHEBI:24875"/>
    </ligand>
</feature>
<feature type="binding site" evidence="1">
    <location>
        <position position="115"/>
    </location>
    <ligand>
        <name>Fe cation</name>
        <dbReference type="ChEBI" id="CHEBI:24875"/>
    </ligand>
</feature>
<feature type="binding site" evidence="1">
    <location>
        <begin position="134"/>
        <end position="138"/>
    </location>
    <ligand>
        <name>substrate</name>
    </ligand>
</feature>
<feature type="binding site" evidence="1">
    <location>
        <position position="167"/>
    </location>
    <ligand>
        <name>substrate</name>
    </ligand>
</feature>
<feature type="binding site" evidence="1">
    <location>
        <position position="180"/>
    </location>
    <ligand>
        <name>substrate</name>
    </ligand>
</feature>
<feature type="binding site" evidence="1">
    <location>
        <position position="276"/>
    </location>
    <ligand>
        <name>substrate</name>
    </ligand>
</feature>
<feature type="binding site" evidence="1">
    <location>
        <position position="304"/>
    </location>
    <ligand>
        <name>Fe cation</name>
        <dbReference type="ChEBI" id="CHEBI:24875"/>
    </ligand>
</feature>
<keyword id="KW-0012">Acyltransferase</keyword>
<keyword id="KW-0963">Cytoplasm</keyword>
<keyword id="KW-0408">Iron</keyword>
<keyword id="KW-0479">Metal-binding</keyword>
<keyword id="KW-0808">Transferase</keyword>
<keyword id="KW-0819">tRNA processing</keyword>
<proteinExistence type="inferred from homology"/>
<dbReference type="EC" id="2.3.1.234" evidence="1"/>
<dbReference type="EMBL" id="CP000076">
    <property type="protein sequence ID" value="AAY94853.1"/>
    <property type="molecule type" value="Genomic_DNA"/>
</dbReference>
<dbReference type="RefSeq" id="WP_011063838.1">
    <property type="nucleotide sequence ID" value="NC_004129.6"/>
</dbReference>
<dbReference type="SMR" id="Q4K4W4"/>
<dbReference type="STRING" id="220664.PFL_5660"/>
<dbReference type="GeneID" id="57478610"/>
<dbReference type="KEGG" id="pfl:PFL_5660"/>
<dbReference type="PATRIC" id="fig|220664.5.peg.5772"/>
<dbReference type="eggNOG" id="COG0533">
    <property type="taxonomic scope" value="Bacteria"/>
</dbReference>
<dbReference type="HOGENOM" id="CLU_023208_0_0_6"/>
<dbReference type="Proteomes" id="UP000008540">
    <property type="component" value="Chromosome"/>
</dbReference>
<dbReference type="GO" id="GO:0005737">
    <property type="term" value="C:cytoplasm"/>
    <property type="evidence" value="ECO:0007669"/>
    <property type="project" value="UniProtKB-SubCell"/>
</dbReference>
<dbReference type="GO" id="GO:0005506">
    <property type="term" value="F:iron ion binding"/>
    <property type="evidence" value="ECO:0007669"/>
    <property type="project" value="UniProtKB-UniRule"/>
</dbReference>
<dbReference type="GO" id="GO:0061711">
    <property type="term" value="F:N(6)-L-threonylcarbamoyladenine synthase activity"/>
    <property type="evidence" value="ECO:0007669"/>
    <property type="project" value="UniProtKB-EC"/>
</dbReference>
<dbReference type="GO" id="GO:0002949">
    <property type="term" value="P:tRNA threonylcarbamoyladenosine modification"/>
    <property type="evidence" value="ECO:0007669"/>
    <property type="project" value="UniProtKB-UniRule"/>
</dbReference>
<dbReference type="CDD" id="cd24133">
    <property type="entry name" value="ASKHA_NBD_TsaD_bac"/>
    <property type="match status" value="1"/>
</dbReference>
<dbReference type="FunFam" id="3.30.420.40:FF:000012">
    <property type="entry name" value="tRNA N6-adenosine threonylcarbamoyltransferase"/>
    <property type="match status" value="1"/>
</dbReference>
<dbReference type="FunFam" id="3.30.420.40:FF:000031">
    <property type="entry name" value="tRNA N6-adenosine threonylcarbamoyltransferase"/>
    <property type="match status" value="1"/>
</dbReference>
<dbReference type="Gene3D" id="3.30.420.40">
    <property type="match status" value="2"/>
</dbReference>
<dbReference type="HAMAP" id="MF_01445">
    <property type="entry name" value="TsaD"/>
    <property type="match status" value="1"/>
</dbReference>
<dbReference type="InterPro" id="IPR043129">
    <property type="entry name" value="ATPase_NBD"/>
</dbReference>
<dbReference type="InterPro" id="IPR000905">
    <property type="entry name" value="Gcp-like_dom"/>
</dbReference>
<dbReference type="InterPro" id="IPR017861">
    <property type="entry name" value="KAE1/TsaD"/>
</dbReference>
<dbReference type="InterPro" id="IPR022450">
    <property type="entry name" value="TsaD"/>
</dbReference>
<dbReference type="NCBIfam" id="TIGR00329">
    <property type="entry name" value="gcp_kae1"/>
    <property type="match status" value="1"/>
</dbReference>
<dbReference type="NCBIfam" id="TIGR03723">
    <property type="entry name" value="T6A_TsaD_YgjD"/>
    <property type="match status" value="1"/>
</dbReference>
<dbReference type="PANTHER" id="PTHR11735">
    <property type="entry name" value="TRNA N6-ADENOSINE THREONYLCARBAMOYLTRANSFERASE"/>
    <property type="match status" value="1"/>
</dbReference>
<dbReference type="PANTHER" id="PTHR11735:SF6">
    <property type="entry name" value="TRNA N6-ADENOSINE THREONYLCARBAMOYLTRANSFERASE, MITOCHONDRIAL"/>
    <property type="match status" value="1"/>
</dbReference>
<dbReference type="Pfam" id="PF00814">
    <property type="entry name" value="TsaD"/>
    <property type="match status" value="1"/>
</dbReference>
<dbReference type="PRINTS" id="PR00789">
    <property type="entry name" value="OSIALOPTASE"/>
</dbReference>
<dbReference type="SUPFAM" id="SSF53067">
    <property type="entry name" value="Actin-like ATPase domain"/>
    <property type="match status" value="2"/>
</dbReference>
<evidence type="ECO:0000255" key="1">
    <source>
        <dbReference type="HAMAP-Rule" id="MF_01445"/>
    </source>
</evidence>
<sequence length="341" mass="36475">MLVLGLETSCDETGVALYDSERGLLADALFSQIDLHRAYGGVVPELASRDHVKRMLPLIRQVLAEADCVPTEIDAIAYTAGPGLVGALLVGASCAQALAFAWGIPALGVHHMEGHLLAPMLEEQPPQFPFVALLVSGGHTQLVRVDGIGQYELLGETLDDAAGEAFDKTAKMIGLNYPGGPEIARLATQGVAGRFVFPRPMTDRPGLDFSFSGLKTFALNTWQQCVSAGDDGEQTRCDISLAFQQAVVETLTIKCKRALKQTGLKRLVIAGGVSANKALRASLEKMLAEMKGNVFYARPEFCTDNGAMIAFAGCQRLQAGQQESLAISVQARWPMEQLSAL</sequence>
<reference key="1">
    <citation type="journal article" date="2005" name="Nat. Biotechnol.">
        <title>Complete genome sequence of the plant commensal Pseudomonas fluorescens Pf-5.</title>
        <authorList>
            <person name="Paulsen I.T."/>
            <person name="Press C.M."/>
            <person name="Ravel J."/>
            <person name="Kobayashi D.Y."/>
            <person name="Myers G.S.A."/>
            <person name="Mavrodi D.V."/>
            <person name="DeBoy R.T."/>
            <person name="Seshadri R."/>
            <person name="Ren Q."/>
            <person name="Madupu R."/>
            <person name="Dodson R.J."/>
            <person name="Durkin A.S."/>
            <person name="Brinkac L.M."/>
            <person name="Daugherty S.C."/>
            <person name="Sullivan S.A."/>
            <person name="Rosovitz M.J."/>
            <person name="Gwinn M.L."/>
            <person name="Zhou L."/>
            <person name="Schneider D.J."/>
            <person name="Cartinhour S.W."/>
            <person name="Nelson W.C."/>
            <person name="Weidman J."/>
            <person name="Watkins K."/>
            <person name="Tran K."/>
            <person name="Khouri H."/>
            <person name="Pierson E.A."/>
            <person name="Pierson L.S. III"/>
            <person name="Thomashow L.S."/>
            <person name="Loper J.E."/>
        </authorList>
    </citation>
    <scope>NUCLEOTIDE SEQUENCE [LARGE SCALE GENOMIC DNA]</scope>
    <source>
        <strain>ATCC BAA-477 / NRRL B-23932 / Pf-5</strain>
    </source>
</reference>
<name>TSAD_PSEF5</name>
<comment type="function">
    <text evidence="1">Required for the formation of a threonylcarbamoyl group on adenosine at position 37 (t(6)A37) in tRNAs that read codons beginning with adenine. Is involved in the transfer of the threonylcarbamoyl moiety of threonylcarbamoyl-AMP (TC-AMP) to the N6 group of A37, together with TsaE and TsaB. TsaD likely plays a direct catalytic role in this reaction.</text>
</comment>
<comment type="catalytic activity">
    <reaction evidence="1">
        <text>L-threonylcarbamoyladenylate + adenosine(37) in tRNA = N(6)-L-threonylcarbamoyladenosine(37) in tRNA + AMP + H(+)</text>
        <dbReference type="Rhea" id="RHEA:37059"/>
        <dbReference type="Rhea" id="RHEA-COMP:10162"/>
        <dbReference type="Rhea" id="RHEA-COMP:10163"/>
        <dbReference type="ChEBI" id="CHEBI:15378"/>
        <dbReference type="ChEBI" id="CHEBI:73682"/>
        <dbReference type="ChEBI" id="CHEBI:74411"/>
        <dbReference type="ChEBI" id="CHEBI:74418"/>
        <dbReference type="ChEBI" id="CHEBI:456215"/>
        <dbReference type="EC" id="2.3.1.234"/>
    </reaction>
</comment>
<comment type="cofactor">
    <cofactor evidence="1">
        <name>Fe(2+)</name>
        <dbReference type="ChEBI" id="CHEBI:29033"/>
    </cofactor>
    <text evidence="1">Binds 1 Fe(2+) ion per subunit.</text>
</comment>
<comment type="subcellular location">
    <subcellularLocation>
        <location evidence="1">Cytoplasm</location>
    </subcellularLocation>
</comment>
<comment type="similarity">
    <text evidence="1">Belongs to the KAE1 / TsaD family.</text>
</comment>
<protein>
    <recommendedName>
        <fullName evidence="1">tRNA N6-adenosine threonylcarbamoyltransferase</fullName>
        <ecNumber evidence="1">2.3.1.234</ecNumber>
    </recommendedName>
    <alternativeName>
        <fullName evidence="1">N6-L-threonylcarbamoyladenine synthase</fullName>
        <shortName evidence="1">t(6)A synthase</shortName>
    </alternativeName>
    <alternativeName>
        <fullName evidence="1">t(6)A37 threonylcarbamoyladenosine biosynthesis protein TsaD</fullName>
    </alternativeName>
    <alternativeName>
        <fullName evidence="1">tRNA threonylcarbamoyladenosine biosynthesis protein TsaD</fullName>
    </alternativeName>
</protein>
<accession>Q4K4W4</accession>
<organism>
    <name type="scientific">Pseudomonas fluorescens (strain ATCC BAA-477 / NRRL B-23932 / Pf-5)</name>
    <dbReference type="NCBI Taxonomy" id="220664"/>
    <lineage>
        <taxon>Bacteria</taxon>
        <taxon>Pseudomonadati</taxon>
        <taxon>Pseudomonadota</taxon>
        <taxon>Gammaproteobacteria</taxon>
        <taxon>Pseudomonadales</taxon>
        <taxon>Pseudomonadaceae</taxon>
        <taxon>Pseudomonas</taxon>
    </lineage>
</organism>